<sequence>MSNITYVKGNILKPKSYARILIHSCNCNGSWGGGIAYQLALRYPKAEKDYVEVCEKYGSNLLGKCILLPSYENSDLLICCLFTSSFGGSSHGEKQSILNYTKLALDKLKTFREAKDKTRTSEDSIGDYLNGHIKYPIGEYKLEMPQINSGIFGVPWKETERVLEEFSGDMSFTVYQL</sequence>
<proteinExistence type="inferred from homology"/>
<protein>
    <recommendedName>
        <fullName>ADP-ribose 1''-phosphate phosphatase</fullName>
        <ecNumber>3.1.3.84</ecNumber>
        <ecNumber>3.2.2.-</ecNumber>
    </recommendedName>
    <alternativeName>
        <fullName>[Protein ADP-ribosylglutamate] hydrolase</fullName>
    </alternativeName>
</protein>
<dbReference type="EC" id="3.1.3.84"/>
<dbReference type="EC" id="3.2.2.-"/>
<dbReference type="EMBL" id="AAFW02000011">
    <property type="protein sequence ID" value="EDN64637.1"/>
    <property type="molecule type" value="Genomic_DNA"/>
</dbReference>
<dbReference type="SMR" id="A6ZKW8"/>
<dbReference type="HOGENOM" id="CLU_054419_1_2_1"/>
<dbReference type="Proteomes" id="UP000007060">
    <property type="component" value="Unassembled WGS sequence"/>
</dbReference>
<dbReference type="GO" id="GO:0004721">
    <property type="term" value="F:phosphoprotein phosphatase activity"/>
    <property type="evidence" value="ECO:0007669"/>
    <property type="project" value="UniProtKB-KW"/>
</dbReference>
<dbReference type="GO" id="GO:0140291">
    <property type="term" value="P:peptidyl-glutamate ADP-deribosylation"/>
    <property type="evidence" value="ECO:0007669"/>
    <property type="project" value="TreeGrafter"/>
</dbReference>
<dbReference type="CDD" id="cd02901">
    <property type="entry name" value="Macro_Poa1p-like"/>
    <property type="match status" value="1"/>
</dbReference>
<dbReference type="FunFam" id="3.40.220.10:FF:000023">
    <property type="entry name" value="ADP-ribose 1''-phosphate phosphatase"/>
    <property type="match status" value="1"/>
</dbReference>
<dbReference type="Gene3D" id="3.40.220.10">
    <property type="entry name" value="Leucine Aminopeptidase, subunit E, domain 1"/>
    <property type="match status" value="1"/>
</dbReference>
<dbReference type="InterPro" id="IPR050892">
    <property type="entry name" value="ADP-ribose_metab_enzymes"/>
</dbReference>
<dbReference type="InterPro" id="IPR002589">
    <property type="entry name" value="Macro_dom"/>
</dbReference>
<dbReference type="InterPro" id="IPR043472">
    <property type="entry name" value="Macro_dom-like"/>
</dbReference>
<dbReference type="PANTHER" id="PTHR12521:SF0">
    <property type="entry name" value="ADP-RIBOSE GLYCOHYDROLASE OARD1"/>
    <property type="match status" value="1"/>
</dbReference>
<dbReference type="PANTHER" id="PTHR12521">
    <property type="entry name" value="PROTEIN C6ORF130"/>
    <property type="match status" value="1"/>
</dbReference>
<dbReference type="Pfam" id="PF01661">
    <property type="entry name" value="Macro"/>
    <property type="match status" value="1"/>
</dbReference>
<dbReference type="SMART" id="SM00506">
    <property type="entry name" value="A1pp"/>
    <property type="match status" value="1"/>
</dbReference>
<dbReference type="SUPFAM" id="SSF52949">
    <property type="entry name" value="Macro domain-like"/>
    <property type="match status" value="1"/>
</dbReference>
<dbReference type="PROSITE" id="PS51154">
    <property type="entry name" value="MACRO"/>
    <property type="match status" value="1"/>
</dbReference>
<reference key="1">
    <citation type="journal article" date="2007" name="Proc. Natl. Acad. Sci. U.S.A.">
        <title>Genome sequencing and comparative analysis of Saccharomyces cerevisiae strain YJM789.</title>
        <authorList>
            <person name="Wei W."/>
            <person name="McCusker J.H."/>
            <person name="Hyman R.W."/>
            <person name="Jones T."/>
            <person name="Ning Y."/>
            <person name="Cao Z."/>
            <person name="Gu Z."/>
            <person name="Bruno D."/>
            <person name="Miranda M."/>
            <person name="Nguyen M."/>
            <person name="Wilhelmy J."/>
            <person name="Komp C."/>
            <person name="Tamse R."/>
            <person name="Wang X."/>
            <person name="Jia P."/>
            <person name="Luedi P."/>
            <person name="Oefner P.J."/>
            <person name="David L."/>
            <person name="Dietrich F.S."/>
            <person name="Li Y."/>
            <person name="Davis R.W."/>
            <person name="Steinmetz L.M."/>
        </authorList>
    </citation>
    <scope>NUCLEOTIDE SEQUENCE [LARGE SCALE GENOMIC DNA]</scope>
    <source>
        <strain>YJM789</strain>
    </source>
</reference>
<comment type="function">
    <text evidence="1">Highly specific phosphatase involved in the metabolism of ADP-ribose 1''-phosphate (Appr1p) which is produced as a consequence of tRNA splicing. Removes ADP-ribose from glutamate residues in proteins bearing a single ADP-ribose moiety. Inactive towards proteins bearing poly-ADP-ribose (By similarity).</text>
</comment>
<comment type="catalytic activity">
    <reaction>
        <text>ADP-alpha-D-ribose 1''-phosphate + H2O = ADP-D-ribose + phosphate</text>
        <dbReference type="Rhea" id="RHEA:25029"/>
        <dbReference type="ChEBI" id="CHEBI:15377"/>
        <dbReference type="ChEBI" id="CHEBI:43474"/>
        <dbReference type="ChEBI" id="CHEBI:57967"/>
        <dbReference type="ChEBI" id="CHEBI:58753"/>
        <dbReference type="EC" id="3.1.3.84"/>
    </reaction>
</comment>
<comment type="similarity">
    <text evidence="3">Belongs to the POA1 family.</text>
</comment>
<accession>A6ZKW8</accession>
<evidence type="ECO:0000250" key="1"/>
<evidence type="ECO:0000255" key="2">
    <source>
        <dbReference type="PROSITE-ProRule" id="PRU00490"/>
    </source>
</evidence>
<evidence type="ECO:0000305" key="3"/>
<keyword id="KW-0378">Hydrolase</keyword>
<keyword id="KW-0904">Protein phosphatase</keyword>
<gene>
    <name type="primary">POA1</name>
    <name type="ORF">SCY_0238</name>
</gene>
<name>POA1_YEAS7</name>
<organism>
    <name type="scientific">Saccharomyces cerevisiae (strain YJM789)</name>
    <name type="common">Baker's yeast</name>
    <dbReference type="NCBI Taxonomy" id="307796"/>
    <lineage>
        <taxon>Eukaryota</taxon>
        <taxon>Fungi</taxon>
        <taxon>Dikarya</taxon>
        <taxon>Ascomycota</taxon>
        <taxon>Saccharomycotina</taxon>
        <taxon>Saccharomycetes</taxon>
        <taxon>Saccharomycetales</taxon>
        <taxon>Saccharomycetaceae</taxon>
        <taxon>Saccharomyces</taxon>
    </lineage>
</organism>
<feature type="chain" id="PRO_0000324915" description="ADP-ribose 1''-phosphate phosphatase">
    <location>
        <begin position="1"/>
        <end position="177"/>
    </location>
</feature>
<feature type="domain" description="Macro" evidence="2">
    <location>
        <begin position="1"/>
        <end position="177"/>
    </location>
</feature>
<feature type="binding site" evidence="1">
    <location>
        <begin position="9"/>
        <end position="11"/>
    </location>
    <ligand>
        <name>substrate</name>
    </ligand>
</feature>
<feature type="binding site" evidence="1">
    <location>
        <begin position="24"/>
        <end position="26"/>
    </location>
    <ligand>
        <name>substrate</name>
    </ligand>
</feature>
<feature type="binding site" evidence="1">
    <location>
        <begin position="31"/>
        <end position="36"/>
    </location>
    <ligand>
        <name>substrate</name>
    </ligand>
</feature>
<feature type="binding site" evidence="1">
    <location>
        <begin position="147"/>
        <end position="153"/>
    </location>
    <ligand>
        <name>substrate</name>
    </ligand>
</feature>